<gene>
    <name type="primary">BUB2</name>
    <name type="ordered locus">YMR055C</name>
    <name type="ORF">YM9796.08C</name>
</gene>
<comment type="function">
    <text>Part of a checkpoint which monitors spindle integrity and prevents premature exit from mitosis. This cell-cycle arrest depends upon inhibition of the GTP-binding protein TEM1 by the BFA1/BUB2 complex.</text>
</comment>
<comment type="subunit">
    <text>Interacts with BFA1.</text>
</comment>
<comment type="interaction">
    <interactant intactId="EBI-3824">
        <id>P26448</id>
    </interactant>
    <interactant intactId="EBI-3586">
        <id>P47113</id>
        <label>BFA1</label>
    </interactant>
    <organismsDiffer>false</organismsDiffer>
    <experiments>5</experiments>
</comment>
<comment type="interaction">
    <interactant intactId="EBI-3824">
        <id>P26448</id>
    </interactant>
    <interactant intactId="EBI-7575">
        <id>P38785</id>
        <label>GIC1</label>
    </interactant>
    <organismsDiffer>false</organismsDiffer>
    <experiments>5</experiments>
</comment>
<comment type="interaction">
    <interactant intactId="EBI-3824">
        <id>P26448</id>
    </interactant>
    <interactant intactId="EBI-19113">
        <id>P38987</id>
        <label>TEM1</label>
    </interactant>
    <organismsDiffer>false</organismsDiffer>
    <experiments>2</experiments>
</comment>
<comment type="subcellular location">
    <subcellularLocation>
        <location>Cytoplasm</location>
        <location>Cytoskeleton</location>
        <location>Spindle pole</location>
    </subcellularLocation>
</comment>
<comment type="similarity">
    <text evidence="2">Belongs to the BUB2 family.</text>
</comment>
<accession>P26448</accession>
<accession>D6VZN0</accession>
<dbReference type="EMBL" id="M64706">
    <property type="protein sequence ID" value="AAA16885.1"/>
    <property type="molecule type" value="Genomic_DNA"/>
</dbReference>
<dbReference type="EMBL" id="Z49703">
    <property type="protein sequence ID" value="CAA89765.1"/>
    <property type="molecule type" value="Genomic_DNA"/>
</dbReference>
<dbReference type="EMBL" id="BK006946">
    <property type="protein sequence ID" value="DAA09954.1"/>
    <property type="molecule type" value="Genomic_DNA"/>
</dbReference>
<dbReference type="PIR" id="A39654">
    <property type="entry name" value="A39654"/>
</dbReference>
<dbReference type="RefSeq" id="NP_013771.1">
    <property type="nucleotide sequence ID" value="NM_001182553.1"/>
</dbReference>
<dbReference type="SMR" id="P26448"/>
<dbReference type="BioGRID" id="35231">
    <property type="interactions" value="229"/>
</dbReference>
<dbReference type="ComplexPortal" id="CPX-964">
    <property type="entry name" value="GTPase-Activating Protein BFA1-BUB2 complex"/>
</dbReference>
<dbReference type="DIP" id="DIP-1215N"/>
<dbReference type="FunCoup" id="P26448">
    <property type="interactions" value="297"/>
</dbReference>
<dbReference type="IntAct" id="P26448">
    <property type="interactions" value="44"/>
</dbReference>
<dbReference type="MINT" id="P26448"/>
<dbReference type="STRING" id="4932.YMR055C"/>
<dbReference type="iPTMnet" id="P26448"/>
<dbReference type="PaxDb" id="4932-YMR055C"/>
<dbReference type="PeptideAtlas" id="P26448"/>
<dbReference type="TopDownProteomics" id="P26448"/>
<dbReference type="EnsemblFungi" id="YMR055C_mRNA">
    <property type="protein sequence ID" value="YMR055C"/>
    <property type="gene ID" value="YMR055C"/>
</dbReference>
<dbReference type="GeneID" id="855077"/>
<dbReference type="KEGG" id="sce:YMR055C"/>
<dbReference type="AGR" id="SGD:S000004659"/>
<dbReference type="SGD" id="S000004659">
    <property type="gene designation" value="BUB2"/>
</dbReference>
<dbReference type="VEuPathDB" id="FungiDB:YMR055C"/>
<dbReference type="eggNOG" id="KOG2058">
    <property type="taxonomic scope" value="Eukaryota"/>
</dbReference>
<dbReference type="GeneTree" id="ENSGT00730000111374"/>
<dbReference type="HOGENOM" id="CLU_029367_2_0_1"/>
<dbReference type="InParanoid" id="P26448"/>
<dbReference type="OMA" id="CHKSEPQ"/>
<dbReference type="OrthoDB" id="10263206at2759"/>
<dbReference type="BioCyc" id="YEAST:G3O-32760-MONOMER"/>
<dbReference type="BioGRID-ORCS" id="855077">
    <property type="hits" value="2 hits in 10 CRISPR screens"/>
</dbReference>
<dbReference type="CD-CODE" id="876000F7">
    <property type="entry name" value="Centrosome"/>
</dbReference>
<dbReference type="PRO" id="PR:P26448"/>
<dbReference type="Proteomes" id="UP000002311">
    <property type="component" value="Chromosome XIII"/>
</dbReference>
<dbReference type="RNAct" id="P26448">
    <property type="molecule type" value="protein"/>
</dbReference>
<dbReference type="GO" id="GO:1990334">
    <property type="term" value="C:Bfa1-Bub2 complex"/>
    <property type="evidence" value="ECO:0000314"/>
    <property type="project" value="SGD"/>
</dbReference>
<dbReference type="GO" id="GO:0005737">
    <property type="term" value="C:cytoplasm"/>
    <property type="evidence" value="ECO:0007669"/>
    <property type="project" value="UniProtKB-KW"/>
</dbReference>
<dbReference type="GO" id="GO:0044732">
    <property type="term" value="C:mitotic spindle pole body"/>
    <property type="evidence" value="ECO:0000318"/>
    <property type="project" value="GO_Central"/>
</dbReference>
<dbReference type="GO" id="GO:0000922">
    <property type="term" value="C:spindle pole"/>
    <property type="evidence" value="ECO:0007669"/>
    <property type="project" value="UniProtKB-SubCell"/>
</dbReference>
<dbReference type="GO" id="GO:0005816">
    <property type="term" value="C:spindle pole body"/>
    <property type="evidence" value="ECO:0000314"/>
    <property type="project" value="SGD"/>
</dbReference>
<dbReference type="GO" id="GO:0051301">
    <property type="term" value="P:cell division"/>
    <property type="evidence" value="ECO:0007669"/>
    <property type="project" value="UniProtKB-KW"/>
</dbReference>
<dbReference type="GO" id="GO:0031578">
    <property type="term" value="P:mitotic spindle orientation checkpoint signaling"/>
    <property type="evidence" value="ECO:0000314"/>
    <property type="project" value="ComplexPortal"/>
</dbReference>
<dbReference type="GO" id="GO:1902543">
    <property type="term" value="P:negative regulation of protein localization to mitotic spindle pole body"/>
    <property type="evidence" value="ECO:0000315"/>
    <property type="project" value="SGD"/>
</dbReference>
<dbReference type="GO" id="GO:0031030">
    <property type="term" value="P:negative regulation of septation initiation signaling"/>
    <property type="evidence" value="ECO:0000318"/>
    <property type="project" value="GO_Central"/>
</dbReference>
<dbReference type="FunFam" id="1.10.8.270:FF:000035">
    <property type="entry name" value="Cell cycle arrest protein BUB2"/>
    <property type="match status" value="1"/>
</dbReference>
<dbReference type="FunFam" id="1.10.472.80:FF:000026">
    <property type="entry name" value="Mitotic check point protein (Bub2)"/>
    <property type="match status" value="1"/>
</dbReference>
<dbReference type="Gene3D" id="1.10.8.270">
    <property type="entry name" value="putative rabgap domain of human tbc1 domain family member 14 like domains"/>
    <property type="match status" value="1"/>
</dbReference>
<dbReference type="Gene3D" id="1.10.472.80">
    <property type="entry name" value="Ypt/Rab-GAP domain of gyp1p, domain 3"/>
    <property type="match status" value="1"/>
</dbReference>
<dbReference type="InterPro" id="IPR000195">
    <property type="entry name" value="Rab-GAP-TBC_dom"/>
</dbReference>
<dbReference type="InterPro" id="IPR035969">
    <property type="entry name" value="Rab-GAP_TBC_sf"/>
</dbReference>
<dbReference type="PANTHER" id="PTHR22957:SF263">
    <property type="entry name" value="MITOTIC CHECK POINT PROTEIN BUB2"/>
    <property type="match status" value="1"/>
</dbReference>
<dbReference type="PANTHER" id="PTHR22957">
    <property type="entry name" value="TBC1 DOMAIN FAMILY MEMBER GTPASE-ACTIVATING PROTEIN"/>
    <property type="match status" value="1"/>
</dbReference>
<dbReference type="Pfam" id="PF00566">
    <property type="entry name" value="RabGAP-TBC"/>
    <property type="match status" value="1"/>
</dbReference>
<dbReference type="SMART" id="SM00164">
    <property type="entry name" value="TBC"/>
    <property type="match status" value="1"/>
</dbReference>
<dbReference type="SUPFAM" id="SSF47923">
    <property type="entry name" value="Ypt/Rab-GAP domain of gyp1p"/>
    <property type="match status" value="2"/>
</dbReference>
<dbReference type="PROSITE" id="PS50086">
    <property type="entry name" value="TBC_RABGAP"/>
    <property type="match status" value="1"/>
</dbReference>
<protein>
    <recommendedName>
        <fullName>Mitotic check point protein BUB2</fullName>
    </recommendedName>
    <alternativeName>
        <fullName>Cell cycle arrest protein BUB2</fullName>
    </alternativeName>
</protein>
<evidence type="ECO:0000255" key="1">
    <source>
        <dbReference type="PROSITE-ProRule" id="PRU00163"/>
    </source>
</evidence>
<evidence type="ECO:0000305" key="2"/>
<proteinExistence type="evidence at protein level"/>
<feature type="chain" id="PRO_0000208008" description="Mitotic check point protein BUB2">
    <location>
        <begin position="1"/>
        <end position="306"/>
    </location>
</feature>
<feature type="domain" description="Rab-GAP TBC" evidence="1">
    <location>
        <begin position="37"/>
        <end position="235"/>
    </location>
</feature>
<sequence length="306" mass="35028">MTSIEDLISNPPLLLHSSLSQLRYLILSEGLPISEDKQQQRTRCYVWTVLSQTSMEASTQRYLALLKLGPPSTTIYQKIKNDTSRTFQTDPNFRNRVSEDALIRCLSCFAWQTQQRRQKTRFGRIPVSTYVQGMNVLLAPLLYSCPSEPMAYQLFTKLCYEMIPTYLTKNLNGAQNGAKLLDISLRIIDPKLSKFLSDNLLTAEIYGMPSILTLSSCNKPLDQVIKLWDFMFAYGFHMNILFVVAFLVKMRSKVFKSDSPVNLLRQFPDFDADEIIRLGVGFIAKIPAQIYDLLVDHLTDPDIYIP</sequence>
<name>BUB2_YEAST</name>
<reference key="1">
    <citation type="journal article" date="1991" name="Cell">
        <title>S. cerevisiae genes required for cell cycle arrest in response to loss of microtubule function.</title>
        <authorList>
            <person name="Hoyt M.A."/>
            <person name="Totis L."/>
            <person name="Roberts B.T."/>
        </authorList>
    </citation>
    <scope>NUCLEOTIDE SEQUENCE [GENOMIC DNA]</scope>
    <source>
        <strain>ATCC 204508 / S288c</strain>
    </source>
</reference>
<reference key="2">
    <citation type="journal article" date="1997" name="Nature">
        <title>The nucleotide sequence of Saccharomyces cerevisiae chromosome XIII.</title>
        <authorList>
            <person name="Bowman S."/>
            <person name="Churcher C.M."/>
            <person name="Badcock K."/>
            <person name="Brown D."/>
            <person name="Chillingworth T."/>
            <person name="Connor R."/>
            <person name="Dedman K."/>
            <person name="Devlin K."/>
            <person name="Gentles S."/>
            <person name="Hamlin N."/>
            <person name="Hunt S."/>
            <person name="Jagels K."/>
            <person name="Lye G."/>
            <person name="Moule S."/>
            <person name="Odell C."/>
            <person name="Pearson D."/>
            <person name="Rajandream M.A."/>
            <person name="Rice P."/>
            <person name="Skelton J."/>
            <person name="Walsh S.V."/>
            <person name="Whitehead S."/>
            <person name="Barrell B.G."/>
        </authorList>
    </citation>
    <scope>NUCLEOTIDE SEQUENCE [LARGE SCALE GENOMIC DNA]</scope>
    <source>
        <strain>ATCC 204508 / S288c</strain>
    </source>
</reference>
<reference key="3">
    <citation type="journal article" date="2014" name="G3 (Bethesda)">
        <title>The reference genome sequence of Saccharomyces cerevisiae: Then and now.</title>
        <authorList>
            <person name="Engel S.R."/>
            <person name="Dietrich F.S."/>
            <person name="Fisk D.G."/>
            <person name="Binkley G."/>
            <person name="Balakrishnan R."/>
            <person name="Costanzo M.C."/>
            <person name="Dwight S.S."/>
            <person name="Hitz B.C."/>
            <person name="Karra K."/>
            <person name="Nash R.S."/>
            <person name="Weng S."/>
            <person name="Wong E.D."/>
            <person name="Lloyd P."/>
            <person name="Skrzypek M.S."/>
            <person name="Miyasato S.R."/>
            <person name="Simison M."/>
            <person name="Cherry J.M."/>
        </authorList>
    </citation>
    <scope>GENOME REANNOTATION</scope>
    <source>
        <strain>ATCC 204508 / S288c</strain>
    </source>
</reference>
<reference key="4">
    <citation type="journal article" date="2001" name="J. Cell Sci.">
        <title>The Bub2-dependent mitotic pathway in yeast acts every cell cycle and regulates cytokinesis.</title>
        <authorList>
            <person name="Lee S.E."/>
            <person name="Jensen S."/>
            <person name="Frenz L.M."/>
            <person name="Johnson A.L."/>
            <person name="Fesquet D."/>
            <person name="Johnston L.H."/>
        </authorList>
    </citation>
    <scope>CHARACTERIZATION</scope>
</reference>
<keyword id="KW-0131">Cell cycle</keyword>
<keyword id="KW-0132">Cell division</keyword>
<keyword id="KW-0963">Cytoplasm</keyword>
<keyword id="KW-0206">Cytoskeleton</keyword>
<keyword id="KW-0498">Mitosis</keyword>
<keyword id="KW-1185">Reference proteome</keyword>
<organism>
    <name type="scientific">Saccharomyces cerevisiae (strain ATCC 204508 / S288c)</name>
    <name type="common">Baker's yeast</name>
    <dbReference type="NCBI Taxonomy" id="559292"/>
    <lineage>
        <taxon>Eukaryota</taxon>
        <taxon>Fungi</taxon>
        <taxon>Dikarya</taxon>
        <taxon>Ascomycota</taxon>
        <taxon>Saccharomycotina</taxon>
        <taxon>Saccharomycetes</taxon>
        <taxon>Saccharomycetales</taxon>
        <taxon>Saccharomycetaceae</taxon>
        <taxon>Saccharomyces</taxon>
    </lineage>
</organism>